<proteinExistence type="inferred from homology"/>
<name>NUOI_ANADF</name>
<gene>
    <name evidence="1" type="primary">nuoI</name>
    <name type="ordered locus">Anae109_1296</name>
</gene>
<comment type="function">
    <text evidence="1">NDH-1 shuttles electrons from NADH, via FMN and iron-sulfur (Fe-S) centers, to quinones in the respiratory chain. The immediate electron acceptor for the enzyme in this species is believed to be ubiquinone. Couples the redox reaction to proton translocation (for every two electrons transferred, four hydrogen ions are translocated across the cytoplasmic membrane), and thus conserves the redox energy in a proton gradient.</text>
</comment>
<comment type="catalytic activity">
    <reaction evidence="1">
        <text>a quinone + NADH + 5 H(+)(in) = a quinol + NAD(+) + 4 H(+)(out)</text>
        <dbReference type="Rhea" id="RHEA:57888"/>
        <dbReference type="ChEBI" id="CHEBI:15378"/>
        <dbReference type="ChEBI" id="CHEBI:24646"/>
        <dbReference type="ChEBI" id="CHEBI:57540"/>
        <dbReference type="ChEBI" id="CHEBI:57945"/>
        <dbReference type="ChEBI" id="CHEBI:132124"/>
    </reaction>
</comment>
<comment type="cofactor">
    <cofactor evidence="1">
        <name>[4Fe-4S] cluster</name>
        <dbReference type="ChEBI" id="CHEBI:49883"/>
    </cofactor>
    <text evidence="1">Binds 2 [4Fe-4S] clusters per subunit.</text>
</comment>
<comment type="subunit">
    <text evidence="1">NDH-1 is composed of 14 different subunits. Subunits NuoA, H, J, K, L, M, N constitute the membrane sector of the complex.</text>
</comment>
<comment type="subcellular location">
    <subcellularLocation>
        <location evidence="1">Cell inner membrane</location>
        <topology evidence="1">Peripheral membrane protein</topology>
    </subcellularLocation>
</comment>
<comment type="similarity">
    <text evidence="1">Belongs to the complex I 23 kDa subunit family.</text>
</comment>
<organism>
    <name type="scientific">Anaeromyxobacter sp. (strain Fw109-5)</name>
    <dbReference type="NCBI Taxonomy" id="404589"/>
    <lineage>
        <taxon>Bacteria</taxon>
        <taxon>Pseudomonadati</taxon>
        <taxon>Myxococcota</taxon>
        <taxon>Myxococcia</taxon>
        <taxon>Myxococcales</taxon>
        <taxon>Cystobacterineae</taxon>
        <taxon>Anaeromyxobacteraceae</taxon>
        <taxon>Anaeromyxobacter</taxon>
    </lineage>
</organism>
<accession>A7H9V8</accession>
<evidence type="ECO:0000255" key="1">
    <source>
        <dbReference type="HAMAP-Rule" id="MF_01351"/>
    </source>
</evidence>
<reference key="1">
    <citation type="journal article" date="2015" name="Genome Announc.">
        <title>Complete genome sequence of Anaeromyxobacter sp. Fw109-5, an anaerobic, metal-reducing bacterium isolated from a contaminated subsurface environment.</title>
        <authorList>
            <person name="Hwang C."/>
            <person name="Copeland A."/>
            <person name="Lucas S."/>
            <person name="Lapidus A."/>
            <person name="Barry K."/>
            <person name="Glavina Del Rio T."/>
            <person name="Dalin E."/>
            <person name="Tice H."/>
            <person name="Pitluck S."/>
            <person name="Sims D."/>
            <person name="Brettin T."/>
            <person name="Bruce D.C."/>
            <person name="Detter J.C."/>
            <person name="Han C.S."/>
            <person name="Schmutz J."/>
            <person name="Larimer F.W."/>
            <person name="Land M.L."/>
            <person name="Hauser L.J."/>
            <person name="Kyrpides N."/>
            <person name="Lykidis A."/>
            <person name="Richardson P."/>
            <person name="Belieav A."/>
            <person name="Sanford R.A."/>
            <person name="Loeffler F.E."/>
            <person name="Fields M.W."/>
        </authorList>
    </citation>
    <scope>NUCLEOTIDE SEQUENCE [LARGE SCALE GENOMIC DNA]</scope>
    <source>
        <strain>Fw109-5</strain>
    </source>
</reference>
<dbReference type="EC" id="7.1.1.-" evidence="1"/>
<dbReference type="EMBL" id="CP000769">
    <property type="protein sequence ID" value="ABS25504.1"/>
    <property type="molecule type" value="Genomic_DNA"/>
</dbReference>
<dbReference type="RefSeq" id="WP_011985610.1">
    <property type="nucleotide sequence ID" value="NC_009675.1"/>
</dbReference>
<dbReference type="SMR" id="A7H9V8"/>
<dbReference type="STRING" id="404589.Anae109_1296"/>
<dbReference type="KEGG" id="afw:Anae109_1296"/>
<dbReference type="eggNOG" id="COG1143">
    <property type="taxonomic scope" value="Bacteria"/>
</dbReference>
<dbReference type="HOGENOM" id="CLU_067218_4_3_7"/>
<dbReference type="OrthoDB" id="9808559at2"/>
<dbReference type="Proteomes" id="UP000006382">
    <property type="component" value="Chromosome"/>
</dbReference>
<dbReference type="GO" id="GO:0005886">
    <property type="term" value="C:plasma membrane"/>
    <property type="evidence" value="ECO:0007669"/>
    <property type="project" value="UniProtKB-SubCell"/>
</dbReference>
<dbReference type="GO" id="GO:0051539">
    <property type="term" value="F:4 iron, 4 sulfur cluster binding"/>
    <property type="evidence" value="ECO:0007669"/>
    <property type="project" value="UniProtKB-KW"/>
</dbReference>
<dbReference type="GO" id="GO:0005506">
    <property type="term" value="F:iron ion binding"/>
    <property type="evidence" value="ECO:0007669"/>
    <property type="project" value="UniProtKB-UniRule"/>
</dbReference>
<dbReference type="GO" id="GO:0050136">
    <property type="term" value="F:NADH:ubiquinone reductase (non-electrogenic) activity"/>
    <property type="evidence" value="ECO:0007669"/>
    <property type="project" value="UniProtKB-UniRule"/>
</dbReference>
<dbReference type="GO" id="GO:0048038">
    <property type="term" value="F:quinone binding"/>
    <property type="evidence" value="ECO:0007669"/>
    <property type="project" value="UniProtKB-KW"/>
</dbReference>
<dbReference type="Gene3D" id="3.30.70.3270">
    <property type="match status" value="1"/>
</dbReference>
<dbReference type="HAMAP" id="MF_01351">
    <property type="entry name" value="NDH1_NuoI"/>
    <property type="match status" value="1"/>
</dbReference>
<dbReference type="InterPro" id="IPR017896">
    <property type="entry name" value="4Fe4S_Fe-S-bd"/>
</dbReference>
<dbReference type="InterPro" id="IPR017900">
    <property type="entry name" value="4Fe4S_Fe_S_CS"/>
</dbReference>
<dbReference type="InterPro" id="IPR010226">
    <property type="entry name" value="NADH_quinone_OxRdtase_chainI"/>
</dbReference>
<dbReference type="PANTHER" id="PTHR10849">
    <property type="entry name" value="NADH DEHYDROGENASE UBIQUINONE IRON-SULFUR PROTEIN 8, MITOCHONDRIAL"/>
    <property type="match status" value="1"/>
</dbReference>
<dbReference type="PANTHER" id="PTHR10849:SF24">
    <property type="entry name" value="NADH-QUINONE OXIDOREDUCTASE SUBUNIT I 2"/>
    <property type="match status" value="1"/>
</dbReference>
<dbReference type="Pfam" id="PF00037">
    <property type="entry name" value="Fer4"/>
    <property type="match status" value="1"/>
</dbReference>
<dbReference type="SUPFAM" id="SSF54862">
    <property type="entry name" value="4Fe-4S ferredoxins"/>
    <property type="match status" value="1"/>
</dbReference>
<dbReference type="PROSITE" id="PS00198">
    <property type="entry name" value="4FE4S_FER_1"/>
    <property type="match status" value="2"/>
</dbReference>
<dbReference type="PROSITE" id="PS51379">
    <property type="entry name" value="4FE4S_FER_2"/>
    <property type="match status" value="2"/>
</dbReference>
<sequence>MPYQIENRPPDLRERMYFPEIIRGIGAVTKHFLRNLFFTRDKNPDILERRRGEFGWADNVTLQYPEERAPYPPGYRGLHRLVPREDGRARCVACYMCATACPAQCIYIEAGEYADDPIEKYPVKFVIDELRCIVCGFCVEACPKDAIRMDSGEHTPPSYERGAQIWDEKRLLRGPPVSYQYDPWLRRGSPSIPAEKLEEMRARARPFSTVATDEYAQTPGFSVRALAQEAKDRAERAK</sequence>
<protein>
    <recommendedName>
        <fullName evidence="1">NADH-quinone oxidoreductase subunit I</fullName>
        <ecNumber evidence="1">7.1.1.-</ecNumber>
    </recommendedName>
    <alternativeName>
        <fullName evidence="1">NADH dehydrogenase I subunit I</fullName>
    </alternativeName>
    <alternativeName>
        <fullName evidence="1">NDH-1 subunit I</fullName>
    </alternativeName>
</protein>
<keyword id="KW-0004">4Fe-4S</keyword>
<keyword id="KW-0997">Cell inner membrane</keyword>
<keyword id="KW-1003">Cell membrane</keyword>
<keyword id="KW-0408">Iron</keyword>
<keyword id="KW-0411">Iron-sulfur</keyword>
<keyword id="KW-0472">Membrane</keyword>
<keyword id="KW-0479">Metal-binding</keyword>
<keyword id="KW-0520">NAD</keyword>
<keyword id="KW-0874">Quinone</keyword>
<keyword id="KW-1185">Reference proteome</keyword>
<keyword id="KW-0677">Repeat</keyword>
<keyword id="KW-1278">Translocase</keyword>
<keyword id="KW-0830">Ubiquinone</keyword>
<feature type="chain" id="PRO_1000067760" description="NADH-quinone oxidoreductase subunit I">
    <location>
        <begin position="1"/>
        <end position="238"/>
    </location>
</feature>
<feature type="domain" description="4Fe-4S ferredoxin-type 1" evidence="1">
    <location>
        <begin position="81"/>
        <end position="111"/>
    </location>
</feature>
<feature type="domain" description="4Fe-4S ferredoxin-type 2" evidence="1">
    <location>
        <begin position="123"/>
        <end position="152"/>
    </location>
</feature>
<feature type="binding site" evidence="1">
    <location>
        <position position="91"/>
    </location>
    <ligand>
        <name>[4Fe-4S] cluster</name>
        <dbReference type="ChEBI" id="CHEBI:49883"/>
        <label>1</label>
    </ligand>
</feature>
<feature type="binding site" evidence="1">
    <location>
        <position position="94"/>
    </location>
    <ligand>
        <name>[4Fe-4S] cluster</name>
        <dbReference type="ChEBI" id="CHEBI:49883"/>
        <label>1</label>
    </ligand>
</feature>
<feature type="binding site" evidence="1">
    <location>
        <position position="97"/>
    </location>
    <ligand>
        <name>[4Fe-4S] cluster</name>
        <dbReference type="ChEBI" id="CHEBI:49883"/>
        <label>1</label>
    </ligand>
</feature>
<feature type="binding site" evidence="1">
    <location>
        <position position="101"/>
    </location>
    <ligand>
        <name>[4Fe-4S] cluster</name>
        <dbReference type="ChEBI" id="CHEBI:49883"/>
        <label>2</label>
    </ligand>
</feature>
<feature type="binding site" evidence="1">
    <location>
        <position position="132"/>
    </location>
    <ligand>
        <name>[4Fe-4S] cluster</name>
        <dbReference type="ChEBI" id="CHEBI:49883"/>
        <label>2</label>
    </ligand>
</feature>
<feature type="binding site" evidence="1">
    <location>
        <position position="135"/>
    </location>
    <ligand>
        <name>[4Fe-4S] cluster</name>
        <dbReference type="ChEBI" id="CHEBI:49883"/>
        <label>2</label>
    </ligand>
</feature>
<feature type="binding site" evidence="1">
    <location>
        <position position="138"/>
    </location>
    <ligand>
        <name>[4Fe-4S] cluster</name>
        <dbReference type="ChEBI" id="CHEBI:49883"/>
        <label>2</label>
    </ligand>
</feature>
<feature type="binding site" evidence="1">
    <location>
        <position position="142"/>
    </location>
    <ligand>
        <name>[4Fe-4S] cluster</name>
        <dbReference type="ChEBI" id="CHEBI:49883"/>
        <label>1</label>
    </ligand>
</feature>